<keyword id="KW-0010">Activator</keyword>
<keyword id="KW-0235">DNA replication</keyword>
<keyword id="KW-0238">DNA-binding</keyword>
<keyword id="KW-0244">Early protein</keyword>
<keyword id="KW-1048">Host nucleus</keyword>
<keyword id="KW-0597">Phosphoprotein</keyword>
<keyword id="KW-1185">Reference proteome</keyword>
<keyword id="KW-0678">Repressor</keyword>
<keyword id="KW-0804">Transcription</keyword>
<keyword id="KW-0805">Transcription regulation</keyword>
<name>VE2_OVPVD</name>
<dbReference type="EMBL" id="M11910">
    <property type="protein sequence ID" value="AAA66844.1"/>
    <property type="molecule type" value="Genomic_DNA"/>
</dbReference>
<dbReference type="PIR" id="A03673">
    <property type="entry name" value="W2WLDP"/>
</dbReference>
<dbReference type="SMR" id="P03123"/>
<dbReference type="KEGG" id="vg:1488982"/>
<dbReference type="Proteomes" id="UP000009185">
    <property type="component" value="Segment"/>
</dbReference>
<dbReference type="GO" id="GO:0042025">
    <property type="term" value="C:host cell nucleus"/>
    <property type="evidence" value="ECO:0007669"/>
    <property type="project" value="UniProtKB-SubCell"/>
</dbReference>
<dbReference type="GO" id="GO:0003677">
    <property type="term" value="F:DNA binding"/>
    <property type="evidence" value="ECO:0007669"/>
    <property type="project" value="UniProtKB-UniRule"/>
</dbReference>
<dbReference type="GO" id="GO:0003700">
    <property type="term" value="F:DNA-binding transcription factor activity"/>
    <property type="evidence" value="ECO:0007669"/>
    <property type="project" value="UniProtKB-UniRule"/>
</dbReference>
<dbReference type="GO" id="GO:0000166">
    <property type="term" value="F:nucleotide binding"/>
    <property type="evidence" value="ECO:0007669"/>
    <property type="project" value="UniProtKB-UniRule"/>
</dbReference>
<dbReference type="GO" id="GO:0006260">
    <property type="term" value="P:DNA replication"/>
    <property type="evidence" value="ECO:0007669"/>
    <property type="project" value="UniProtKB-KW"/>
</dbReference>
<dbReference type="GO" id="GO:0006351">
    <property type="term" value="P:DNA-templated transcription"/>
    <property type="evidence" value="ECO:0007669"/>
    <property type="project" value="UniProtKB-UniRule"/>
</dbReference>
<dbReference type="GO" id="GO:0006275">
    <property type="term" value="P:regulation of DNA replication"/>
    <property type="evidence" value="ECO:0007669"/>
    <property type="project" value="UniProtKB-UniRule"/>
</dbReference>
<dbReference type="GO" id="GO:0039693">
    <property type="term" value="P:viral DNA genome replication"/>
    <property type="evidence" value="ECO:0007669"/>
    <property type="project" value="UniProtKB-UniRule"/>
</dbReference>
<dbReference type="Gene3D" id="3.30.70.330">
    <property type="match status" value="1"/>
</dbReference>
<dbReference type="Gene3D" id="1.10.287.30">
    <property type="entry name" value="E2 (early) protein, N terminal domain, subdomain 1"/>
    <property type="match status" value="1"/>
</dbReference>
<dbReference type="Gene3D" id="2.170.200.10">
    <property type="entry name" value="Papillomavirus E2 early protein domain"/>
    <property type="match status" value="1"/>
</dbReference>
<dbReference type="HAMAP" id="MF_04001">
    <property type="entry name" value="PPV_E2"/>
    <property type="match status" value="1"/>
</dbReference>
<dbReference type="InterPro" id="IPR035975">
    <property type="entry name" value="E2/EBNA1_C_sf"/>
</dbReference>
<dbReference type="InterPro" id="IPR012677">
    <property type="entry name" value="Nucleotide-bd_a/b_plait_sf"/>
</dbReference>
<dbReference type="InterPro" id="IPR000427">
    <property type="entry name" value="Papillomavirus_E2_C"/>
</dbReference>
<dbReference type="InterPro" id="IPR001866">
    <property type="entry name" value="PPV_E2_N"/>
</dbReference>
<dbReference type="InterPro" id="IPR033668">
    <property type="entry name" value="Reg_prot_E2"/>
</dbReference>
<dbReference type="InterPro" id="IPR036050">
    <property type="entry name" value="Regulatory_protein_E2_N"/>
</dbReference>
<dbReference type="InterPro" id="IPR042503">
    <property type="entry name" value="Regulatory_protein_E2_N_1"/>
</dbReference>
<dbReference type="InterPro" id="IPR042504">
    <property type="entry name" value="Regulatory_protein_E2_N_2"/>
</dbReference>
<dbReference type="Pfam" id="PF00511">
    <property type="entry name" value="PPV_E2_C"/>
    <property type="match status" value="1"/>
</dbReference>
<dbReference type="Pfam" id="PF00508">
    <property type="entry name" value="PPV_E2_N"/>
    <property type="match status" value="1"/>
</dbReference>
<dbReference type="SUPFAM" id="SSF51332">
    <property type="entry name" value="E2 regulatory, transactivation domain"/>
    <property type="match status" value="1"/>
</dbReference>
<dbReference type="SUPFAM" id="SSF54957">
    <property type="entry name" value="Viral DNA-binding domain"/>
    <property type="match status" value="1"/>
</dbReference>
<protein>
    <recommendedName>
        <fullName evidence="1">Regulatory protein E2</fullName>
    </recommendedName>
</protein>
<comment type="function">
    <text evidence="1">Plays a role in the initiation of viral DNA replication. A dimer of E2 interacts with a dimer of E1 in order to improve specificity of E1 DNA binding activity. Once the complex recognizes and binds DNA at specific sites, the E2 dimer is removed from DNA. E2 also regulates viral transcription through binding to the E2RE response element (5'-ACCNNNNNNGGT-3') present in multiple copies in the regulatory regions of the viral genome. Activates or represses transcription depending on E2RE's position with regards to proximal promoter elements including the TATA-box. Repression occurs by sterically hindering the assembly of the transcription initiation complex.</text>
</comment>
<comment type="subunit">
    <text evidence="1">Binds DNA as homodimer. Interacts with protein E1; this interaction greatly increases E1 DNA-binding activity. Interacts with protein L1; this interaction enhances E2-dependent replication and transcription activation. Interacts with protein L2; this interaction inhibits E2 transcriptional activity but not DNA replication function E2. Interacts with protein E7; this interaction inhibits E7 oncogenic activity. Interacts with host TAF1; this interaction modulates E2-dependent transcriptional regulation. Interacts with host BRD4; this interaction mediates E2 transcriptional activation function. Additionally, the interaction with host BRD4 on mitotic chromosomes mediates tethering of the viral genome. Interacts with host TOPBP1; this interaction is required for optimal viral DNA replication.</text>
</comment>
<comment type="subcellular location">
    <subcellularLocation>
        <location evidence="1">Host nucleus</location>
    </subcellularLocation>
</comment>
<comment type="PTM">
    <text evidence="1">Phosphorylated.</text>
</comment>
<comment type="similarity">
    <text evidence="1">Belongs to the papillomaviridae E2 protein family.</text>
</comment>
<feature type="chain" id="PRO_0000133246" description="Regulatory protein E2">
    <location>
        <begin position="1"/>
        <end position="416"/>
    </location>
</feature>
<feature type="region of interest" description="Transactivation domain" evidence="1">
    <location>
        <begin position="1"/>
        <end position="203"/>
    </location>
</feature>
<feature type="region of interest" description="Disordered" evidence="2">
    <location>
        <begin position="190"/>
        <end position="321"/>
    </location>
</feature>
<feature type="region of interest" description="DNA-binding domain" evidence="1">
    <location>
        <begin position="333"/>
        <end position="416"/>
    </location>
</feature>
<feature type="compositionally biased region" description="Polar residues" evidence="2">
    <location>
        <begin position="256"/>
        <end position="278"/>
    </location>
</feature>
<gene>
    <name evidence="1" type="primary">E2</name>
</gene>
<accession>P03123</accession>
<sequence>MSAAKEQLLAAQETQMTLIEKDSTDLKDHIDSWGPVRREHGLLYAARHKGLIWLGLNPVPPCSVKCLEARQAIEMQLLGNSLKESPWCNEPWSLCDLSWGRYQAPPAETLKKGARLVEVEYDGSSTNKTWYTAWNSLYLRKPDEEGWETATGGADADGLFYTTMSGTRVYYELFERDAARYSTTGTWTVRDNDRTYHSHSAPSHSRETIEGLWNSGGRERGRPTNSPDRAVLHTPPGGNTVHGPVRACENRGRSINRPTPYSTPQSPRSGVGPDTTSPLPSPVPQNPRCVSLPDGFGRGEEDNPPSPDQHDVIPNPQPKEPRFSLFGSSGGLPCLLISGTGNQVKCYSFRVKRWHRDKYHHCTTTWWAVGEQGSERPGDATVIVTFKDQSQRSMFLQQVPLPPGMSAHGVTMTVDF</sequence>
<evidence type="ECO:0000255" key="1">
    <source>
        <dbReference type="HAMAP-Rule" id="MF_04001"/>
    </source>
</evidence>
<evidence type="ECO:0000256" key="2">
    <source>
        <dbReference type="SAM" id="MobiDB-lite"/>
    </source>
</evidence>
<reference key="1">
    <citation type="journal article" date="1985" name="J. Virol.">
        <title>Molecular cloning and nucleotide sequence of deer papillomavirus.</title>
        <authorList>
            <person name="Groff D.E."/>
            <person name="Lancaster W.D."/>
        </authorList>
    </citation>
    <scope>NUCLEOTIDE SEQUENCE [GENOMIC DNA]</scope>
</reference>
<organism>
    <name type="scientific">Odocoileus virginianus papillomavirus 1</name>
    <name type="common">DPV</name>
    <name type="synonym">Deer papillomavirus</name>
    <dbReference type="NCBI Taxonomy" id="2772504"/>
    <lineage>
        <taxon>Viruses</taxon>
        <taxon>Monodnaviria</taxon>
        <taxon>Shotokuvirae</taxon>
        <taxon>Cossaviricota</taxon>
        <taxon>Papovaviricetes</taxon>
        <taxon>Zurhausenvirales</taxon>
        <taxon>Papillomaviridae</taxon>
        <taxon>Firstpapillomavirinae</taxon>
        <taxon>Deltapapillomavirus</taxon>
        <taxon>Deer papillomavirus</taxon>
    </lineage>
</organism>
<proteinExistence type="inferred from homology"/>
<organismHost>
    <name type="scientific">Odocoileus virginianus</name>
    <name type="common">White-tailed deer</name>
    <dbReference type="NCBI Taxonomy" id="9874"/>
</organismHost>